<gene>
    <name evidence="10" type="primary">helA</name>
    <name evidence="8" type="synonym">osc3</name>
    <name evidence="7" type="synonym">pdsA</name>
    <name type="ORF">AFUA_4G14770</name>
</gene>
<sequence length="735" mass="83091">MATDSSMPGTVIGKAEFSDTKAASEFGTDLSRWRLNVDNGRHMWEYLESEDEARKRPQSFLEKYWLGLPYELPARPRATCALEAVENGWEFFKRLQTADGHWGCNDDGPLFVTSGMVIARYIVGIPIDSHMKQEMCRYLLNVVNEDGGWGLFIQSPSTVFGTVMNYCMLRILGLGPEHPAMAKARNTLHRLGSARATPTWGKFWLCVLGVYEWEGMVPLPPEPLLVPASLPFNPGKWWVHTRNVYISMSYLYGHRFSMPPNKLVQALRDELYDIPYQQINWPAQRTNVSAADRLTDPTWIQRSFTSALTMYETFKIPFLRRRALNEALFQIETETRNTHYLCIAPVSFASNMLALYHAHGRDSHWIRGMRDRFIDPMWLCREGLAASGTNGTSLWDTALTVQATIDAGLAARPENQAILRKALEFIDNSQIREDPLGVHHVYRQPTRGAWPFSTRDQSYAVSDTTAEAVKVIVLLQRIEGFPSRISDERLQQAIDLILGMENAGGGFSAYEPVRGPKFLELLNITELYENVMTDNLYPECTSSVIMCLTTFAREYPTYRPRDIQACLSRSIDYLLRSQYPNGGWFASWGVCFTYATMFALQGLACMGWNESNCAACQRACSFLLQHQNPDGGWGESLDTVRFKQYLPHPDGSQVTNTAYAVIGLLAARCGNHEAIRRGVAYLVKEQQDTGEWLPGPLEGVFAPPGGMRYPNYKFHFTLMALGRYVAIHGNECLAI</sequence>
<feature type="chain" id="PRO_0000415495" description="Protostadienol synthase helA">
    <location>
        <begin position="1"/>
        <end position="735"/>
    </location>
</feature>
<feature type="repeat" description="PFTB 1">
    <location>
        <begin position="132"/>
        <end position="173"/>
    </location>
</feature>
<feature type="repeat" description="PFTB 2">
    <location>
        <begin position="490"/>
        <end position="531"/>
    </location>
</feature>
<feature type="repeat" description="PFTB 3">
    <location>
        <begin position="567"/>
        <end position="607"/>
    </location>
</feature>
<feature type="repeat" description="PFTB 4">
    <location>
        <begin position="616"/>
        <end position="663"/>
    </location>
</feature>
<feature type="active site" description="Proton donor" evidence="11">
    <location>
        <position position="463"/>
    </location>
</feature>
<feature type="mutagenesis site" description="Changes its oxidosqualene:protostadienol cyclase (OSPC) activity to oxidosqualene:lanosterol cyclase (OSLC) activity." evidence="4">
    <original>APPGGMR</original>
    <variation>NKSCAIS</variation>
    <location>
        <begin position="702"/>
        <end position="708"/>
    </location>
</feature>
<feature type="mutagenesis site" description="Impairs catalytic activity; when associated with S-704." evidence="4">
    <original>P</original>
    <variation>K</variation>
    <location>
        <position position="703"/>
    </location>
</feature>
<feature type="mutagenesis site" description="Impairs catalytic activity; when associated with K-703." evidence="4">
    <original>P</original>
    <variation>S</variation>
    <location>
        <position position="704"/>
    </location>
</feature>
<keyword id="KW-0413">Isomerase</keyword>
<keyword id="KW-0444">Lipid biosynthesis</keyword>
<keyword id="KW-0443">Lipid metabolism</keyword>
<keyword id="KW-1185">Reference proteome</keyword>
<keyword id="KW-0677">Repeat</keyword>
<keyword id="KW-0752">Steroid biosynthesis</keyword>
<keyword id="KW-0843">Virulence</keyword>
<name>HELA_ASPFU</name>
<comment type="function">
    <text evidence="2 3 4 6">Protostadienol synthase; part of the gene cluster that mediates the biosynthesis of helvolic acid, an antibacterial nortriterpenoid (PubMed:19216560, PubMed:19415934, PubMed:19951700, PubMed:29158519). Protostadienol synthase helA cyclizes (3S)-oxidosqualene to (17Z)-protosta-17(20),24-dien-3-beta-ol (protostadienol) (PubMed:19216560, PubMed:19415934, PubMed:19951700, PubMed:29158519). The synthesis of protostadienol is followed by several steps of monooxygenation, dehydrogenation, and acyl transfer to yield the final helvolic acid (PubMed:19216560). Following the cyclization to the tetracyclic protostadienol by helA, cytochrome P450 monooxygenases helB1-mediated and helB2-mediated oxidation at C-4 and C-16, acyltransferase helD2-dependent acetylation of 16-OH, oxidation of C-21 by cytochrome P450 monooxygenase helB4, and short chain dehydrogenase helC-dependent oxidative decarboxylation yield the fusidane skeleton (PubMed:29158519). This intermediate is further modified in three additional steps mediated by the cytochrome P450 monooxygenase helB3, the acyltransferase helD1, and the 3-ketosteroid 1-dehydrogenase helE to give helvolic acid (PubMed:19216560, PubMed:19415934, PubMed:29158519). Compared with the late stages in the biosynthesis of helvolic acid, enzymes involved in the early stage modifications act in a relatively strict order (PubMed:29158519). The hydroxylation of C-16 by helB1 and subsequent acetylation by helD2 should occur before the helB3-mediated oxidation of C-21 (PubMed:29158519). C-4 demethylation in fusidane-type antibiotics proceeds in an unusual manner though it is also achieved by oxidative decarboxylation (PubMed:19415934, PubMed:29158519). The methyl group at C-4 beta position is oxidized by helB1 and subsequently removed by the short chain dehydrogenase helC (PubMed:19415934, PubMed:29158519).</text>
</comment>
<comment type="catalytic activity">
    <reaction evidence="2 3 4 6">
        <text>(S)-2,3-epoxysqualene = (17Z)-protosta-17(20),24-dien-3beta-ol</text>
        <dbReference type="Rhea" id="RHEA:30987"/>
        <dbReference type="ChEBI" id="CHEBI:15441"/>
        <dbReference type="ChEBI" id="CHEBI:62457"/>
        <dbReference type="EC" id="5.4.99.32"/>
    </reaction>
</comment>
<comment type="biophysicochemical properties">
    <kinetics>
        <KM evidence="4">14.4 uM for 2,3-oxidosqualene</KM>
    </kinetics>
</comment>
<comment type="pathway">
    <text evidence="2 3 6">Mycotoxin biosynthesis.</text>
</comment>
<comment type="induction">
    <text evidence="1 5">Expression is under the control of the secondary metabolism regulator laeA (PubMed:17432932). Expression is down-regulated when gliT is deleted and up-regulated upon exposure to exogenous gliotoxin (PubMed:25311525).</text>
</comment>
<comment type="similarity">
    <text evidence="11">Belongs to the terpene cyclase/mutase family.</text>
</comment>
<accession>Q4WR16</accession>
<proteinExistence type="evidence at protein level"/>
<organism>
    <name type="scientific">Aspergillus fumigatus (strain ATCC MYA-4609 / CBS 101355 / FGSC A1100 / Af293)</name>
    <name type="common">Neosartorya fumigata</name>
    <dbReference type="NCBI Taxonomy" id="330879"/>
    <lineage>
        <taxon>Eukaryota</taxon>
        <taxon>Fungi</taxon>
        <taxon>Dikarya</taxon>
        <taxon>Ascomycota</taxon>
        <taxon>Pezizomycotina</taxon>
        <taxon>Eurotiomycetes</taxon>
        <taxon>Eurotiomycetidae</taxon>
        <taxon>Eurotiales</taxon>
        <taxon>Aspergillaceae</taxon>
        <taxon>Aspergillus</taxon>
        <taxon>Aspergillus subgen. Fumigati</taxon>
    </lineage>
</organism>
<dbReference type="EC" id="5.4.99.32" evidence="2 3 4 6"/>
<dbReference type="EMBL" id="AAHF01000005">
    <property type="protein sequence ID" value="EAL89318.1"/>
    <property type="molecule type" value="Genomic_DNA"/>
</dbReference>
<dbReference type="RefSeq" id="XP_751356.1">
    <property type="nucleotide sequence ID" value="XM_746263.1"/>
</dbReference>
<dbReference type="SMR" id="Q4WR16"/>
<dbReference type="STRING" id="330879.Q4WR16"/>
<dbReference type="EnsemblFungi" id="EAL89318">
    <property type="protein sequence ID" value="EAL89318"/>
    <property type="gene ID" value="AFUA_4G14770"/>
</dbReference>
<dbReference type="GeneID" id="3509337"/>
<dbReference type="KEGG" id="afm:AFUA_4G14770"/>
<dbReference type="VEuPathDB" id="FungiDB:Afu4g14770"/>
<dbReference type="eggNOG" id="KOG0497">
    <property type="taxonomic scope" value="Eukaryota"/>
</dbReference>
<dbReference type="HOGENOM" id="CLU_009074_2_1_1"/>
<dbReference type="InParanoid" id="Q4WR16"/>
<dbReference type="OMA" id="CYDDSTC"/>
<dbReference type="OrthoDB" id="21502at2759"/>
<dbReference type="BioCyc" id="MetaCyc:MONOMER-16527"/>
<dbReference type="Proteomes" id="UP000002530">
    <property type="component" value="Chromosome 4"/>
</dbReference>
<dbReference type="GO" id="GO:0005811">
    <property type="term" value="C:lipid droplet"/>
    <property type="evidence" value="ECO:0000318"/>
    <property type="project" value="GO_Central"/>
</dbReference>
<dbReference type="GO" id="GO:0000250">
    <property type="term" value="F:lanosterol synthase activity"/>
    <property type="evidence" value="ECO:0000315"/>
    <property type="project" value="AspGD"/>
</dbReference>
<dbReference type="GO" id="GO:1900581">
    <property type="term" value="P:(17Z)-protosta-17(20),24-dien-3beta-ol biosynthetic process"/>
    <property type="evidence" value="ECO:0000315"/>
    <property type="project" value="AspGD"/>
</dbReference>
<dbReference type="GO" id="GO:0006696">
    <property type="term" value="P:ergosterol biosynthetic process"/>
    <property type="evidence" value="ECO:0000318"/>
    <property type="project" value="GO_Central"/>
</dbReference>
<dbReference type="GO" id="GO:1900812">
    <property type="term" value="P:helvolic acid biosynthetic process"/>
    <property type="evidence" value="ECO:0000314"/>
    <property type="project" value="GO_Central"/>
</dbReference>
<dbReference type="GO" id="GO:0019748">
    <property type="term" value="P:secondary metabolic process"/>
    <property type="evidence" value="ECO:0000317"/>
    <property type="project" value="AspGD"/>
</dbReference>
<dbReference type="CDD" id="cd02892">
    <property type="entry name" value="SQCY_1"/>
    <property type="match status" value="1"/>
</dbReference>
<dbReference type="FunFam" id="1.50.10.20:FF:000002">
    <property type="entry name" value="Terpene cyclase/mutase family member"/>
    <property type="match status" value="1"/>
</dbReference>
<dbReference type="FunFam" id="1.50.10.20:FF:000003">
    <property type="entry name" value="Terpene cyclase/mutase family member"/>
    <property type="match status" value="1"/>
</dbReference>
<dbReference type="Gene3D" id="1.50.10.20">
    <property type="match status" value="2"/>
</dbReference>
<dbReference type="Gene3D" id="6.20.120.20">
    <property type="match status" value="1"/>
</dbReference>
<dbReference type="InterPro" id="IPR032696">
    <property type="entry name" value="SQ_cyclase_C"/>
</dbReference>
<dbReference type="InterPro" id="IPR032697">
    <property type="entry name" value="SQ_cyclase_N"/>
</dbReference>
<dbReference type="InterPro" id="IPR018333">
    <property type="entry name" value="Squalene_cyclase"/>
</dbReference>
<dbReference type="InterPro" id="IPR008930">
    <property type="entry name" value="Terpenoid_cyclase/PrenylTrfase"/>
</dbReference>
<dbReference type="NCBIfam" id="TIGR01787">
    <property type="entry name" value="squalene_cyclas"/>
    <property type="match status" value="1"/>
</dbReference>
<dbReference type="PANTHER" id="PTHR11764:SF20">
    <property type="entry name" value="LANOSTEROL SYNTHASE"/>
    <property type="match status" value="1"/>
</dbReference>
<dbReference type="PANTHER" id="PTHR11764">
    <property type="entry name" value="TERPENE CYCLASE/MUTASE FAMILY MEMBER"/>
    <property type="match status" value="1"/>
</dbReference>
<dbReference type="Pfam" id="PF13243">
    <property type="entry name" value="SQHop_cyclase_C"/>
    <property type="match status" value="1"/>
</dbReference>
<dbReference type="Pfam" id="PF13249">
    <property type="entry name" value="SQHop_cyclase_N"/>
    <property type="match status" value="1"/>
</dbReference>
<dbReference type="SFLD" id="SFLDG01016">
    <property type="entry name" value="Prenyltransferase_Like_2"/>
    <property type="match status" value="1"/>
</dbReference>
<dbReference type="SUPFAM" id="SSF48239">
    <property type="entry name" value="Terpenoid cyclases/Protein prenyltransferases"/>
    <property type="match status" value="2"/>
</dbReference>
<reference key="1">
    <citation type="journal article" date="2005" name="Nature">
        <title>Genomic sequence of the pathogenic and allergenic filamentous fungus Aspergillus fumigatus.</title>
        <authorList>
            <person name="Nierman W.C."/>
            <person name="Pain A."/>
            <person name="Anderson M.J."/>
            <person name="Wortman J.R."/>
            <person name="Kim H.S."/>
            <person name="Arroyo J."/>
            <person name="Berriman M."/>
            <person name="Abe K."/>
            <person name="Archer D.B."/>
            <person name="Bermejo C."/>
            <person name="Bennett J.W."/>
            <person name="Bowyer P."/>
            <person name="Chen D."/>
            <person name="Collins M."/>
            <person name="Coulsen R."/>
            <person name="Davies R."/>
            <person name="Dyer P.S."/>
            <person name="Farman M.L."/>
            <person name="Fedorova N."/>
            <person name="Fedorova N.D."/>
            <person name="Feldblyum T.V."/>
            <person name="Fischer R."/>
            <person name="Fosker N."/>
            <person name="Fraser A."/>
            <person name="Garcia J.L."/>
            <person name="Garcia M.J."/>
            <person name="Goble A."/>
            <person name="Goldman G.H."/>
            <person name="Gomi K."/>
            <person name="Griffith-Jones S."/>
            <person name="Gwilliam R."/>
            <person name="Haas B.J."/>
            <person name="Haas H."/>
            <person name="Harris D.E."/>
            <person name="Horiuchi H."/>
            <person name="Huang J."/>
            <person name="Humphray S."/>
            <person name="Jimenez J."/>
            <person name="Keller N."/>
            <person name="Khouri H."/>
            <person name="Kitamoto K."/>
            <person name="Kobayashi T."/>
            <person name="Konzack S."/>
            <person name="Kulkarni R."/>
            <person name="Kumagai T."/>
            <person name="Lafton A."/>
            <person name="Latge J.-P."/>
            <person name="Li W."/>
            <person name="Lord A."/>
            <person name="Lu C."/>
            <person name="Majoros W.H."/>
            <person name="May G.S."/>
            <person name="Miller B.L."/>
            <person name="Mohamoud Y."/>
            <person name="Molina M."/>
            <person name="Monod M."/>
            <person name="Mouyna I."/>
            <person name="Mulligan S."/>
            <person name="Murphy L.D."/>
            <person name="O'Neil S."/>
            <person name="Paulsen I."/>
            <person name="Penalva M.A."/>
            <person name="Pertea M."/>
            <person name="Price C."/>
            <person name="Pritchard B.L."/>
            <person name="Quail M.A."/>
            <person name="Rabbinowitsch E."/>
            <person name="Rawlins N."/>
            <person name="Rajandream M.A."/>
            <person name="Reichard U."/>
            <person name="Renauld H."/>
            <person name="Robson G.D."/>
            <person name="Rodriguez de Cordoba S."/>
            <person name="Rodriguez-Pena J.M."/>
            <person name="Ronning C.M."/>
            <person name="Rutter S."/>
            <person name="Salzberg S.L."/>
            <person name="Sanchez M."/>
            <person name="Sanchez-Ferrero J.C."/>
            <person name="Saunders D."/>
            <person name="Seeger K."/>
            <person name="Squares R."/>
            <person name="Squares S."/>
            <person name="Takeuchi M."/>
            <person name="Tekaia F."/>
            <person name="Turner G."/>
            <person name="Vazquez de Aldana C.R."/>
            <person name="Weidman J."/>
            <person name="White O."/>
            <person name="Woodward J.R."/>
            <person name="Yu J.-H."/>
            <person name="Fraser C.M."/>
            <person name="Galagan J.E."/>
            <person name="Asai K."/>
            <person name="Machida M."/>
            <person name="Hall N."/>
            <person name="Barrell B.G."/>
            <person name="Denning D.W."/>
        </authorList>
    </citation>
    <scope>NUCLEOTIDE SEQUENCE [LARGE SCALE GENOMIC DNA]</scope>
    <source>
        <strain>ATCC MYA-4609 / CBS 101355 / FGSC A1100 / Af293</strain>
    </source>
</reference>
<reference key="2">
    <citation type="journal article" date="2007" name="PLoS Pathog.">
        <title>Transcriptional regulation of chemical diversity in Aspergillus fumigatus by LaeA.</title>
        <authorList>
            <person name="Perrin R.M."/>
            <person name="Fedorova N.D."/>
            <person name="Bok J.W."/>
            <person name="Cramer R.A."/>
            <person name="Wortman J.R."/>
            <person name="Kim H.S."/>
            <person name="Nierman W.C."/>
            <person name="Keller N.P."/>
        </authorList>
    </citation>
    <scope>INDUCTION</scope>
</reference>
<reference key="3">
    <citation type="journal article" date="2009" name="J. Am. Chem. Soc.">
        <title>Biosynthesis of steroidal antibiotic fusidanes: functional analysis of oxidosqualene cyclase and subsequent tailoring enzymes from Aspergillus fumigatus.</title>
        <authorList>
            <person name="Mitsuguchi H."/>
            <person name="Seshime Y."/>
            <person name="Fujii I."/>
            <person name="Shibuya M."/>
            <person name="Ebizuka Y."/>
            <person name="Kushiro T."/>
        </authorList>
    </citation>
    <scope>FUNCTION</scope>
    <scope>CATALYTIC ACTIVITY</scope>
    <scope>PATHWAY</scope>
</reference>
<reference key="4">
    <citation type="journal article" date="2009" name="Org. Lett.">
        <title>Protostadienol biosynthesis and metabolism in the pathogenic fungus Aspergillus fumigatus.</title>
        <authorList>
            <person name="Lodeiro S."/>
            <person name="Xiong Q."/>
            <person name="Wilson W.K."/>
            <person name="Ivanova Y."/>
            <person name="Smith M.L."/>
            <person name="May G.S."/>
            <person name="Matsuda S.P."/>
        </authorList>
    </citation>
    <scope>FUNCTION</scope>
    <scope>CATALYTIC ACTIVITY</scope>
    <scope>PATHWAY</scope>
</reference>
<reference key="5">
    <citation type="journal article" date="2010" name="Biochem. Biophys. Res. Commun.">
        <title>Protostadienol synthase from Aspergillus fumigatus: functional conversion into lanosterol synthase.</title>
        <authorList>
            <person name="Kimura M."/>
            <person name="Kushiro T."/>
            <person name="Shibuya M."/>
            <person name="Ebizuka Y."/>
            <person name="Abe I."/>
        </authorList>
    </citation>
    <scope>FUNCTION</scope>
    <scope>CATALYTIC ACTIVITY</scope>
    <scope>BIOPHYSICOCHEMICAL PROPERTIES</scope>
    <scope>MUTAGENESIS OF PRO-703 AND PRO-704</scope>
</reference>
<reference key="6">
    <citation type="journal article" date="2014" name="BMC Genomics">
        <title>RNA-seq reveals the pan-transcriptomic impact of attenuating the gliotoxin self-protection mechanism in Aspergillus fumigatus.</title>
        <authorList>
            <person name="O'Keeffe G."/>
            <person name="Hammel S."/>
            <person name="Owens R.A."/>
            <person name="Keane T.M."/>
            <person name="Fitzpatrick D.A."/>
            <person name="Jones G.W."/>
            <person name="Doyle S."/>
        </authorList>
    </citation>
    <scope>INDUCTION</scope>
</reference>
<reference key="7">
    <citation type="journal article" date="2017" name="Nat. Commun.">
        <title>Biosynthesis of helvolic acid and identification of an unusual C-4-demethylation process distinct from sterol biosynthesis.</title>
        <authorList>
            <person name="Lv J.M."/>
            <person name="Hu D."/>
            <person name="Gao H."/>
            <person name="Kushiro T."/>
            <person name="Awakawa T."/>
            <person name="Chen G.D."/>
            <person name="Wang C.X."/>
            <person name="Abe I."/>
            <person name="Yao X.S."/>
        </authorList>
    </citation>
    <scope>FUNCTION</scope>
    <scope>CATALYTIC ACTIVITY</scope>
    <scope>PATHWAY</scope>
</reference>
<protein>
    <recommendedName>
        <fullName evidence="10">Protostadienol synthase helA</fullName>
        <ecNumber evidence="2 3 4 6">5.4.99.32</ecNumber>
    </recommendedName>
    <alternativeName>
        <fullName evidence="10">Helvolic acid biosynthesis cluster protein A</fullName>
    </alternativeName>
    <alternativeName>
        <fullName evidence="8">Oxidosqualene cyclase</fullName>
    </alternativeName>
    <alternativeName>
        <fullName evidence="9">Oxidosqualene:protostadienol cyclase</fullName>
        <shortName evidence="9">OSPC</shortName>
    </alternativeName>
</protein>
<evidence type="ECO:0000269" key="1">
    <source>
    </source>
</evidence>
<evidence type="ECO:0000269" key="2">
    <source>
    </source>
</evidence>
<evidence type="ECO:0000269" key="3">
    <source>
    </source>
</evidence>
<evidence type="ECO:0000269" key="4">
    <source>
    </source>
</evidence>
<evidence type="ECO:0000269" key="5">
    <source>
    </source>
</evidence>
<evidence type="ECO:0000269" key="6">
    <source>
    </source>
</evidence>
<evidence type="ECO:0000303" key="7">
    <source>
    </source>
</evidence>
<evidence type="ECO:0000303" key="8">
    <source>
    </source>
</evidence>
<evidence type="ECO:0000303" key="9">
    <source>
    </source>
</evidence>
<evidence type="ECO:0000303" key="10">
    <source>
    </source>
</evidence>
<evidence type="ECO:0000305" key="11"/>